<reference key="1">
    <citation type="submission" date="2007-04" db="EMBL/GenBank/DDBJ databases">
        <authorList>
            <consortium name="NIH - Mammalian Gene Collection (MGC) project"/>
        </authorList>
    </citation>
    <scope>NUCLEOTIDE SEQUENCE [LARGE SCALE MRNA]</scope>
    <source>
        <strain>Hereford</strain>
        <tissue>Brain cortex</tissue>
        <tissue>Fetal pons</tissue>
    </source>
</reference>
<protein>
    <recommendedName>
        <fullName evidence="4">Transcriptional regulator QRICH1</fullName>
    </recommendedName>
    <alternativeName>
        <fullName>Glutamine-rich protein 1</fullName>
    </alternativeName>
</protein>
<feature type="chain" id="PRO_0000269852" description="Transcriptional regulator QRICH1">
    <location>
        <begin position="1"/>
        <end position="779"/>
    </location>
</feature>
<feature type="domain" description="CARD" evidence="2">
    <location>
        <begin position="6"/>
        <end position="48"/>
    </location>
</feature>
<feature type="region of interest" description="Disordered" evidence="3">
    <location>
        <begin position="141"/>
        <end position="163"/>
    </location>
</feature>
<feature type="region of interest" description="Disordered" evidence="3">
    <location>
        <begin position="219"/>
        <end position="242"/>
    </location>
</feature>
<feature type="region of interest" description="Disordered" evidence="3">
    <location>
        <begin position="420"/>
        <end position="443"/>
    </location>
</feature>
<feature type="compositionally biased region" description="Low complexity" evidence="3">
    <location>
        <begin position="420"/>
        <end position="430"/>
    </location>
</feature>
<feature type="modified residue" description="N-acetylmethionine" evidence="1">
    <location>
        <position position="1"/>
    </location>
</feature>
<feature type="modified residue" description="Phosphoserine" evidence="1">
    <location>
        <position position="346"/>
    </location>
</feature>
<feature type="modified residue" description="Phosphoserine" evidence="1">
    <location>
        <position position="467"/>
    </location>
</feature>
<feature type="cross-link" description="Glycyl lysine isopeptide (Lys-Gly) (interchain with G-Cter in SUMO2)" evidence="1">
    <location>
        <position position="354"/>
    </location>
</feature>
<feature type="cross-link" description="Glycyl lysine isopeptide (Lys-Gly) (interchain with G-Cter in SUMO2)" evidence="1">
    <location>
        <position position="359"/>
    </location>
</feature>
<proteinExistence type="evidence at transcript level"/>
<accession>Q0P5J0</accession>
<accession>A5D7N1</accession>
<gene>
    <name type="primary">QRICH1</name>
</gene>
<organism>
    <name type="scientific">Bos taurus</name>
    <name type="common">Bovine</name>
    <dbReference type="NCBI Taxonomy" id="9913"/>
    <lineage>
        <taxon>Eukaryota</taxon>
        <taxon>Metazoa</taxon>
        <taxon>Chordata</taxon>
        <taxon>Craniata</taxon>
        <taxon>Vertebrata</taxon>
        <taxon>Euteleostomi</taxon>
        <taxon>Mammalia</taxon>
        <taxon>Eutheria</taxon>
        <taxon>Laurasiatheria</taxon>
        <taxon>Artiodactyla</taxon>
        <taxon>Ruminantia</taxon>
        <taxon>Pecora</taxon>
        <taxon>Bovidae</taxon>
        <taxon>Bovinae</taxon>
        <taxon>Bos</taxon>
    </lineage>
</organism>
<evidence type="ECO:0000250" key="1">
    <source>
        <dbReference type="UniProtKB" id="Q2TAL8"/>
    </source>
</evidence>
<evidence type="ECO:0000255" key="2">
    <source>
        <dbReference type="PROSITE-ProRule" id="PRU00046"/>
    </source>
</evidence>
<evidence type="ECO:0000256" key="3">
    <source>
        <dbReference type="SAM" id="MobiDB-lite"/>
    </source>
</evidence>
<evidence type="ECO:0000305" key="4"/>
<name>QRIC1_BOVIN</name>
<comment type="function">
    <text evidence="1">Transcriptional regulator that acts as a mediator of the integrated stress response (ISR) through transcriptional control of protein homeostasis under conditions of ER stress. Controls the outcome of the unfolded protein response (UPR), an ER-stress response pathway that either promotes recovery of ER homeostasis and cell survival, or triggers the terminal UPR which elicits programmed cell death when ER stress is prolonged and unresolved. ER stress induces QRICH1 translation by a ribosome translation re-initiation mechanism in response to EIF2S1/eIF-2-alpha phosphorylation, and stress-induced QRICH1 regulates a transcriptional program associated with protein translation, protein secretion-mediated proteotoxicity and cell death during the terminal UPR. May cooperate with ATF4 transcription factor signaling to regulate ER homeostasis which is critical for cell viability. Up-regulates CASP3/caspase-3 activity in epithelial cells under ER stress. Central regulator of proteotoxicity associated with ER stress-mediated inflammatory diseases in the intestines and liver. Involved in chondrocyte hypertrophy, a process required for normal longitudinal bone growth.</text>
</comment>
<comment type="subcellular location">
    <subcellularLocation>
        <location evidence="1">Nucleus</location>
    </subcellularLocation>
    <subcellularLocation>
        <location evidence="1">Cytoplasm</location>
    </subcellularLocation>
    <subcellularLocation>
        <location evidence="1">Cell membrane</location>
    </subcellularLocation>
</comment>
<comment type="domain">
    <text evidence="1">The CARD domain may be involved in the regulation of caspase activity in the context of programmed cell death.</text>
</comment>
<keyword id="KW-0007">Acetylation</keyword>
<keyword id="KW-1003">Cell membrane</keyword>
<keyword id="KW-0963">Cytoplasm</keyword>
<keyword id="KW-1017">Isopeptide bond</keyword>
<keyword id="KW-0472">Membrane</keyword>
<keyword id="KW-0539">Nucleus</keyword>
<keyword id="KW-0597">Phosphoprotein</keyword>
<keyword id="KW-1185">Reference proteome</keyword>
<keyword id="KW-0804">Transcription</keyword>
<keyword id="KW-0805">Transcription regulation</keyword>
<keyword id="KW-0832">Ubl conjugation</keyword>
<keyword id="KW-0834">Unfolded protein response</keyword>
<sequence length="779" mass="86752">MNNSLENTISFEEYIRVKARSVPQHRMKEFLDSLASKGPEALQEFQQTATTTMVYQQGGNCIYTDSTEVAGSLLELACPVTTSVQPQTQPEQQIQVQQPQQVQVQVQVQQSPQQVSAQQLSPQLTVHQPAEQPIHVQVQIQGQAAQPAAPSIQTPSLQSPSPSQLQAAQIQVQHMQAAQQIQAPEIPEEHIPHQQIQAQLVAGQSLAGGQQIQIQTVGALSPPPSQQGSPREGERRVGTASVLQPVKKRKVDMPITVSYAISGQPVATVLAIPQGQQQSYVSLRPDLLTVDSAHLYSATGTITSPTGETWTIPVYSAQPRGDPQQQSITHIAIPQEAYNAVHVSGSPTALAAVKLEDDKEKMVGTTSVVKNSHEEVVQTLANSLFPAQFMNGNIHIPVAVQAVAGTYQNTAQTVHIWDPQQQPQQQTPQEQTPPPPQQQQQQQLQVTCSAQTVQVAEVEPQSQPQPSPELLLPNSLKPEEGLEVWKNWAQTKNAELEKDAQNRLAPIGRRQLLRFQEDLISSAVAELNYGLCLMTREARNGEGEPYDPDVLYYIFLCIQKYLFENGRVDDIFSDLYYVRFTEWLHEVLKDVQPRVTPLGYVLPSHVTEEMLWECKQLGAHSPSTLLTTLMFFNTKYFLLKTVDQHMKLAFSKVLRQTKKNPSNPKDKSTSIRYLKALGIHQTGQKVTDDMYAEQTENPENPLRCPIKLYDFYLFKCPQSVKGRNDTFYLTPEPVVAPNSPIWYSVQPISREQMGQMLTRILVIREIQEAIAVASASTMH</sequence>
<dbReference type="EMBL" id="BC119972">
    <property type="protein sequence ID" value="AAI19973.1"/>
    <property type="molecule type" value="mRNA"/>
</dbReference>
<dbReference type="EMBL" id="BC140621">
    <property type="protein sequence ID" value="AAI40622.1"/>
    <property type="molecule type" value="mRNA"/>
</dbReference>
<dbReference type="RefSeq" id="NP_001091484.1">
    <property type="nucleotide sequence ID" value="NM_001098015.2"/>
</dbReference>
<dbReference type="RefSeq" id="XP_005222840.1">
    <property type="nucleotide sequence ID" value="XM_005222783.5"/>
</dbReference>
<dbReference type="RefSeq" id="XP_015315045.1">
    <property type="nucleotide sequence ID" value="XM_015459559.3"/>
</dbReference>
<dbReference type="RefSeq" id="XP_024838372.1">
    <property type="nucleotide sequence ID" value="XM_024982604.2"/>
</dbReference>
<dbReference type="RefSeq" id="XP_024838373.1">
    <property type="nucleotide sequence ID" value="XM_024982605.2"/>
</dbReference>
<dbReference type="RefSeq" id="XP_059735587.1">
    <property type="nucleotide sequence ID" value="XM_059879604.1"/>
</dbReference>
<dbReference type="SMR" id="Q0P5J0"/>
<dbReference type="FunCoup" id="Q0P5J0">
    <property type="interactions" value="4934"/>
</dbReference>
<dbReference type="STRING" id="9913.ENSBTAP00000025183"/>
<dbReference type="PaxDb" id="9913-ENSBTAP00000025183"/>
<dbReference type="GeneID" id="511970"/>
<dbReference type="KEGG" id="bta:511970"/>
<dbReference type="CTD" id="54870"/>
<dbReference type="VEuPathDB" id="HostDB:ENSBTAG00000018924"/>
<dbReference type="eggNOG" id="ENOG502QU8W">
    <property type="taxonomic scope" value="Eukaryota"/>
</dbReference>
<dbReference type="HOGENOM" id="CLU_025446_0_0_1"/>
<dbReference type="InParanoid" id="Q0P5J0"/>
<dbReference type="OMA" id="QVQIHEA"/>
<dbReference type="OrthoDB" id="10025028at2759"/>
<dbReference type="TreeFam" id="TF336988"/>
<dbReference type="Proteomes" id="UP000009136">
    <property type="component" value="Chromosome 22"/>
</dbReference>
<dbReference type="Bgee" id="ENSBTAG00000018924">
    <property type="expression patterns" value="Expressed in mesenteric lymph node and 107 other cell types or tissues"/>
</dbReference>
<dbReference type="GO" id="GO:0005737">
    <property type="term" value="C:cytoplasm"/>
    <property type="evidence" value="ECO:0007669"/>
    <property type="project" value="UniProtKB-SubCell"/>
</dbReference>
<dbReference type="GO" id="GO:0005634">
    <property type="term" value="C:nucleus"/>
    <property type="evidence" value="ECO:0000250"/>
    <property type="project" value="UniProtKB"/>
</dbReference>
<dbReference type="GO" id="GO:0005886">
    <property type="term" value="C:plasma membrane"/>
    <property type="evidence" value="ECO:0007669"/>
    <property type="project" value="UniProtKB-SubCell"/>
</dbReference>
<dbReference type="GO" id="GO:0003677">
    <property type="term" value="F:DNA binding"/>
    <property type="evidence" value="ECO:0000250"/>
    <property type="project" value="UniProtKB"/>
</dbReference>
<dbReference type="GO" id="GO:0030968">
    <property type="term" value="P:endoplasmic reticulum unfolded protein response"/>
    <property type="evidence" value="ECO:0000250"/>
    <property type="project" value="UniProtKB"/>
</dbReference>
<dbReference type="GO" id="GO:0140467">
    <property type="term" value="P:integrated stress response signaling"/>
    <property type="evidence" value="ECO:0000250"/>
    <property type="project" value="UniProtKB"/>
</dbReference>
<dbReference type="GO" id="GO:0070059">
    <property type="term" value="P:intrinsic apoptotic signaling pathway in response to endoplasmic reticulum stress"/>
    <property type="evidence" value="ECO:0000250"/>
    <property type="project" value="UniProtKB"/>
</dbReference>
<dbReference type="GO" id="GO:0036499">
    <property type="term" value="P:PERK-mediated unfolded protein response"/>
    <property type="evidence" value="ECO:0000250"/>
    <property type="project" value="UniProtKB"/>
</dbReference>
<dbReference type="GO" id="GO:0043065">
    <property type="term" value="P:positive regulation of apoptotic process"/>
    <property type="evidence" value="ECO:0000250"/>
    <property type="project" value="UniProtKB"/>
</dbReference>
<dbReference type="GO" id="GO:0045893">
    <property type="term" value="P:positive regulation of DNA-templated transcription"/>
    <property type="evidence" value="ECO:0000250"/>
    <property type="project" value="UniProtKB"/>
</dbReference>
<dbReference type="GO" id="GO:0034976">
    <property type="term" value="P:response to endoplasmic reticulum stress"/>
    <property type="evidence" value="ECO:0000250"/>
    <property type="project" value="UniProtKB"/>
</dbReference>
<dbReference type="CDD" id="cd01671">
    <property type="entry name" value="CARD"/>
    <property type="match status" value="1"/>
</dbReference>
<dbReference type="InterPro" id="IPR021893">
    <property type="entry name" value="DUF3504"/>
</dbReference>
<dbReference type="InterPro" id="IPR051284">
    <property type="entry name" value="ZnF_MYMT-QRICH1"/>
</dbReference>
<dbReference type="PANTHER" id="PTHR45736:SF8">
    <property type="entry name" value="TRANSCRIPTIONAL REGULATOR QRICH1"/>
    <property type="match status" value="1"/>
</dbReference>
<dbReference type="PANTHER" id="PTHR45736">
    <property type="entry name" value="ZINC FINGER MYM-TYPE PROTEIN"/>
    <property type="match status" value="1"/>
</dbReference>
<dbReference type="Pfam" id="PF12012">
    <property type="entry name" value="DUF3504"/>
    <property type="match status" value="1"/>
</dbReference>